<feature type="chain" id="PRO_0000381603" description="Biotin synthase">
    <location>
        <begin position="1"/>
        <end position="346"/>
    </location>
</feature>
<feature type="domain" description="Radical SAM core" evidence="2">
    <location>
        <begin position="38"/>
        <end position="256"/>
    </location>
</feature>
<feature type="binding site" evidence="1">
    <location>
        <position position="53"/>
    </location>
    <ligand>
        <name>[4Fe-4S] cluster</name>
        <dbReference type="ChEBI" id="CHEBI:49883"/>
        <note>4Fe-4S-S-AdoMet</note>
    </ligand>
</feature>
<feature type="binding site" evidence="1">
    <location>
        <position position="57"/>
    </location>
    <ligand>
        <name>[4Fe-4S] cluster</name>
        <dbReference type="ChEBI" id="CHEBI:49883"/>
        <note>4Fe-4S-S-AdoMet</note>
    </ligand>
</feature>
<feature type="binding site" evidence="1">
    <location>
        <position position="60"/>
    </location>
    <ligand>
        <name>[4Fe-4S] cluster</name>
        <dbReference type="ChEBI" id="CHEBI:49883"/>
        <note>4Fe-4S-S-AdoMet</note>
    </ligand>
</feature>
<feature type="binding site" evidence="1">
    <location>
        <position position="97"/>
    </location>
    <ligand>
        <name>[2Fe-2S] cluster</name>
        <dbReference type="ChEBI" id="CHEBI:190135"/>
    </ligand>
</feature>
<feature type="binding site" evidence="1">
    <location>
        <position position="128"/>
    </location>
    <ligand>
        <name>[2Fe-2S] cluster</name>
        <dbReference type="ChEBI" id="CHEBI:190135"/>
    </ligand>
</feature>
<feature type="binding site" evidence="1">
    <location>
        <position position="188"/>
    </location>
    <ligand>
        <name>[2Fe-2S] cluster</name>
        <dbReference type="ChEBI" id="CHEBI:190135"/>
    </ligand>
</feature>
<feature type="binding site" evidence="1">
    <location>
        <position position="260"/>
    </location>
    <ligand>
        <name>[2Fe-2S] cluster</name>
        <dbReference type="ChEBI" id="CHEBI:190135"/>
    </ligand>
</feature>
<organism>
    <name type="scientific">Salmonella paratyphi A (strain ATCC 9150 / SARB42)</name>
    <dbReference type="NCBI Taxonomy" id="295319"/>
    <lineage>
        <taxon>Bacteria</taxon>
        <taxon>Pseudomonadati</taxon>
        <taxon>Pseudomonadota</taxon>
        <taxon>Gammaproteobacteria</taxon>
        <taxon>Enterobacterales</taxon>
        <taxon>Enterobacteriaceae</taxon>
        <taxon>Salmonella</taxon>
    </lineage>
</organism>
<reference key="1">
    <citation type="journal article" date="2004" name="Nat. Genet.">
        <title>Comparison of genome degradation in Paratyphi A and Typhi, human-restricted serovars of Salmonella enterica that cause typhoid.</title>
        <authorList>
            <person name="McClelland M."/>
            <person name="Sanderson K.E."/>
            <person name="Clifton S.W."/>
            <person name="Latreille P."/>
            <person name="Porwollik S."/>
            <person name="Sabo A."/>
            <person name="Meyer R."/>
            <person name="Bieri T."/>
            <person name="Ozersky P."/>
            <person name="McLellan M."/>
            <person name="Harkins C.R."/>
            <person name="Wang C."/>
            <person name="Nguyen C."/>
            <person name="Berghoff A."/>
            <person name="Elliott G."/>
            <person name="Kohlberg S."/>
            <person name="Strong C."/>
            <person name="Du F."/>
            <person name="Carter J."/>
            <person name="Kremizki C."/>
            <person name="Layman D."/>
            <person name="Leonard S."/>
            <person name="Sun H."/>
            <person name="Fulton L."/>
            <person name="Nash W."/>
            <person name="Miner T."/>
            <person name="Minx P."/>
            <person name="Delehaunty K."/>
            <person name="Fronick C."/>
            <person name="Magrini V."/>
            <person name="Nhan M."/>
            <person name="Warren W."/>
            <person name="Florea L."/>
            <person name="Spieth J."/>
            <person name="Wilson R.K."/>
        </authorList>
    </citation>
    <scope>NUCLEOTIDE SEQUENCE [LARGE SCALE GENOMIC DNA]</scope>
    <source>
        <strain>ATCC 9150 / SARB42</strain>
    </source>
</reference>
<accession>Q5PG48</accession>
<protein>
    <recommendedName>
        <fullName evidence="1">Biotin synthase</fullName>
        <ecNumber evidence="1">2.8.1.6</ecNumber>
    </recommendedName>
</protein>
<name>BIOB_SALPA</name>
<gene>
    <name evidence="1" type="primary">bioB</name>
    <name type="ordered locus">SPA1958</name>
</gene>
<comment type="function">
    <text evidence="1">Catalyzes the conversion of dethiobiotin (DTB) to biotin by the insertion of a sulfur atom into dethiobiotin via a radical-based mechanism.</text>
</comment>
<comment type="catalytic activity">
    <reaction evidence="1">
        <text>(4R,5S)-dethiobiotin + (sulfur carrier)-SH + 2 reduced [2Fe-2S]-[ferredoxin] + 2 S-adenosyl-L-methionine = (sulfur carrier)-H + biotin + 2 5'-deoxyadenosine + 2 L-methionine + 2 oxidized [2Fe-2S]-[ferredoxin]</text>
        <dbReference type="Rhea" id="RHEA:22060"/>
        <dbReference type="Rhea" id="RHEA-COMP:10000"/>
        <dbReference type="Rhea" id="RHEA-COMP:10001"/>
        <dbReference type="Rhea" id="RHEA-COMP:14737"/>
        <dbReference type="Rhea" id="RHEA-COMP:14739"/>
        <dbReference type="ChEBI" id="CHEBI:17319"/>
        <dbReference type="ChEBI" id="CHEBI:29917"/>
        <dbReference type="ChEBI" id="CHEBI:33737"/>
        <dbReference type="ChEBI" id="CHEBI:33738"/>
        <dbReference type="ChEBI" id="CHEBI:57586"/>
        <dbReference type="ChEBI" id="CHEBI:57844"/>
        <dbReference type="ChEBI" id="CHEBI:59789"/>
        <dbReference type="ChEBI" id="CHEBI:64428"/>
        <dbReference type="ChEBI" id="CHEBI:149473"/>
        <dbReference type="EC" id="2.8.1.6"/>
    </reaction>
</comment>
<comment type="cofactor">
    <cofactor evidence="1">
        <name>[4Fe-4S] cluster</name>
        <dbReference type="ChEBI" id="CHEBI:49883"/>
    </cofactor>
    <text evidence="1">Binds 1 [4Fe-4S] cluster. The cluster is coordinated with 3 cysteines and an exchangeable S-adenosyl-L-methionine.</text>
</comment>
<comment type="cofactor">
    <cofactor evidence="1">
        <name>[2Fe-2S] cluster</name>
        <dbReference type="ChEBI" id="CHEBI:190135"/>
    </cofactor>
    <text evidence="1">Binds 1 [2Fe-2S] cluster. The cluster is coordinated with 3 cysteines and 1 arginine.</text>
</comment>
<comment type="pathway">
    <text evidence="1">Cofactor biosynthesis; biotin biosynthesis; biotin from 7,8-diaminononanoate: step 2/2.</text>
</comment>
<comment type="subunit">
    <text evidence="1">Homodimer.</text>
</comment>
<comment type="similarity">
    <text evidence="1">Belongs to the radical SAM superfamily. Biotin synthase family.</text>
</comment>
<dbReference type="EC" id="2.8.1.6" evidence="1"/>
<dbReference type="EMBL" id="CP000026">
    <property type="protein sequence ID" value="AAV77867.1"/>
    <property type="molecule type" value="Genomic_DNA"/>
</dbReference>
<dbReference type="RefSeq" id="WP_000090727.1">
    <property type="nucleotide sequence ID" value="NC_006511.1"/>
</dbReference>
<dbReference type="SMR" id="Q5PG48"/>
<dbReference type="KEGG" id="spt:SPA1958"/>
<dbReference type="HOGENOM" id="CLU_033172_1_2_6"/>
<dbReference type="UniPathway" id="UPA00078">
    <property type="reaction ID" value="UER00162"/>
</dbReference>
<dbReference type="Proteomes" id="UP000008185">
    <property type="component" value="Chromosome"/>
</dbReference>
<dbReference type="GO" id="GO:0051537">
    <property type="term" value="F:2 iron, 2 sulfur cluster binding"/>
    <property type="evidence" value="ECO:0007669"/>
    <property type="project" value="UniProtKB-KW"/>
</dbReference>
<dbReference type="GO" id="GO:0051539">
    <property type="term" value="F:4 iron, 4 sulfur cluster binding"/>
    <property type="evidence" value="ECO:0007669"/>
    <property type="project" value="UniProtKB-KW"/>
</dbReference>
<dbReference type="GO" id="GO:0004076">
    <property type="term" value="F:biotin synthase activity"/>
    <property type="evidence" value="ECO:0007669"/>
    <property type="project" value="UniProtKB-UniRule"/>
</dbReference>
<dbReference type="GO" id="GO:0005506">
    <property type="term" value="F:iron ion binding"/>
    <property type="evidence" value="ECO:0007669"/>
    <property type="project" value="UniProtKB-UniRule"/>
</dbReference>
<dbReference type="GO" id="GO:0009102">
    <property type="term" value="P:biotin biosynthetic process"/>
    <property type="evidence" value="ECO:0007669"/>
    <property type="project" value="UniProtKB-UniRule"/>
</dbReference>
<dbReference type="CDD" id="cd01335">
    <property type="entry name" value="Radical_SAM"/>
    <property type="match status" value="1"/>
</dbReference>
<dbReference type="FunFam" id="3.20.20.70:FF:000011">
    <property type="entry name" value="Biotin synthase"/>
    <property type="match status" value="1"/>
</dbReference>
<dbReference type="Gene3D" id="3.20.20.70">
    <property type="entry name" value="Aldolase class I"/>
    <property type="match status" value="1"/>
</dbReference>
<dbReference type="HAMAP" id="MF_01694">
    <property type="entry name" value="BioB"/>
    <property type="match status" value="1"/>
</dbReference>
<dbReference type="InterPro" id="IPR013785">
    <property type="entry name" value="Aldolase_TIM"/>
</dbReference>
<dbReference type="InterPro" id="IPR010722">
    <property type="entry name" value="BATS_dom"/>
</dbReference>
<dbReference type="InterPro" id="IPR002684">
    <property type="entry name" value="Biotin_synth/BioAB"/>
</dbReference>
<dbReference type="InterPro" id="IPR024177">
    <property type="entry name" value="Biotin_synthase"/>
</dbReference>
<dbReference type="InterPro" id="IPR006638">
    <property type="entry name" value="Elp3/MiaA/NifB-like_rSAM"/>
</dbReference>
<dbReference type="InterPro" id="IPR007197">
    <property type="entry name" value="rSAM"/>
</dbReference>
<dbReference type="NCBIfam" id="TIGR00433">
    <property type="entry name" value="bioB"/>
    <property type="match status" value="1"/>
</dbReference>
<dbReference type="PANTHER" id="PTHR22976">
    <property type="entry name" value="BIOTIN SYNTHASE"/>
    <property type="match status" value="1"/>
</dbReference>
<dbReference type="PANTHER" id="PTHR22976:SF2">
    <property type="entry name" value="BIOTIN SYNTHASE, MITOCHONDRIAL"/>
    <property type="match status" value="1"/>
</dbReference>
<dbReference type="Pfam" id="PF06968">
    <property type="entry name" value="BATS"/>
    <property type="match status" value="1"/>
</dbReference>
<dbReference type="Pfam" id="PF04055">
    <property type="entry name" value="Radical_SAM"/>
    <property type="match status" value="1"/>
</dbReference>
<dbReference type="PIRSF" id="PIRSF001619">
    <property type="entry name" value="Biotin_synth"/>
    <property type="match status" value="1"/>
</dbReference>
<dbReference type="SFLD" id="SFLDF00272">
    <property type="entry name" value="biotin_synthase"/>
    <property type="match status" value="1"/>
</dbReference>
<dbReference type="SFLD" id="SFLDS00029">
    <property type="entry name" value="Radical_SAM"/>
    <property type="match status" value="1"/>
</dbReference>
<dbReference type="SMART" id="SM00876">
    <property type="entry name" value="BATS"/>
    <property type="match status" value="1"/>
</dbReference>
<dbReference type="SMART" id="SM00729">
    <property type="entry name" value="Elp3"/>
    <property type="match status" value="1"/>
</dbReference>
<dbReference type="SUPFAM" id="SSF102114">
    <property type="entry name" value="Radical SAM enzymes"/>
    <property type="match status" value="1"/>
</dbReference>
<dbReference type="PROSITE" id="PS51918">
    <property type="entry name" value="RADICAL_SAM"/>
    <property type="match status" value="1"/>
</dbReference>
<proteinExistence type="inferred from homology"/>
<evidence type="ECO:0000255" key="1">
    <source>
        <dbReference type="HAMAP-Rule" id="MF_01694"/>
    </source>
</evidence>
<evidence type="ECO:0000255" key="2">
    <source>
        <dbReference type="PROSITE-ProRule" id="PRU01266"/>
    </source>
</evidence>
<keyword id="KW-0001">2Fe-2S</keyword>
<keyword id="KW-0004">4Fe-4S</keyword>
<keyword id="KW-0093">Biotin biosynthesis</keyword>
<keyword id="KW-0408">Iron</keyword>
<keyword id="KW-0411">Iron-sulfur</keyword>
<keyword id="KW-0479">Metal-binding</keyword>
<keyword id="KW-0949">S-adenosyl-L-methionine</keyword>
<keyword id="KW-0808">Transferase</keyword>
<sequence>MARHPRWTLSQVTELFEKPLLELLFEAQQIHRQHFDPQQVQVSTLLSIKTGACPEDCKYCPQSSRYKTGLEAERLMEVEQVLDSARKAKNAGSTRFCMGAAWKNPHERDMPYLEQIVQGVKAMGLETCMTLGMLNESQAQRLANAGLDYYNHNLDTSPEFYGNIITTRTYQERLDTLEKVREAGIKVCSGGIVGLGETVTDRAGLLLQLANLPTPPESVPINMLVKVKGTPLADNDDVDAFDFIRTIAVARIMMPTSYVRLSAGREQMNEQTQAMCFMAGANSIFYGCKLLTTPNPAEDKDLQLFRKLGLNPQQTRVLAGDNEQQQRLEQTLMTPDTDDYYNAAAL</sequence>